<keyword id="KW-0285">Flavoprotein</keyword>
<keyword id="KW-0288">FMN</keyword>
<keyword id="KW-0560">Oxidoreductase</keyword>
<keyword id="KW-0664">Pyridoxine biosynthesis</keyword>
<reference key="1">
    <citation type="submission" date="2007-04" db="EMBL/GenBank/DDBJ databases">
        <title>Complete sequence of Shewanella putrefaciens CN-32.</title>
        <authorList>
            <consortium name="US DOE Joint Genome Institute"/>
            <person name="Copeland A."/>
            <person name="Lucas S."/>
            <person name="Lapidus A."/>
            <person name="Barry K."/>
            <person name="Detter J.C."/>
            <person name="Glavina del Rio T."/>
            <person name="Hammon N."/>
            <person name="Israni S."/>
            <person name="Dalin E."/>
            <person name="Tice H."/>
            <person name="Pitluck S."/>
            <person name="Chain P."/>
            <person name="Malfatti S."/>
            <person name="Shin M."/>
            <person name="Vergez L."/>
            <person name="Schmutz J."/>
            <person name="Larimer F."/>
            <person name="Land M."/>
            <person name="Hauser L."/>
            <person name="Kyrpides N."/>
            <person name="Mikhailova N."/>
            <person name="Romine M.F."/>
            <person name="Fredrickson J."/>
            <person name="Tiedje J."/>
            <person name="Richardson P."/>
        </authorList>
    </citation>
    <scope>NUCLEOTIDE SEQUENCE [LARGE SCALE GENOMIC DNA]</scope>
    <source>
        <strain>CN-32 / ATCC BAA-453</strain>
    </source>
</reference>
<sequence>MTDLSDIRREYAKGGLRRADLPQNPMDLFALWMTQARDAELSDPTAMCVATVDEQGQPFQRIVLLKRFDDTGFVFFTNLGSRKAQQIAANNKVSLHFPWHPLERQVSVLGEAQALSTTEVLKYFMTRPKDSQIAAWVSQQSSKLSARQVLEGKFFEMKAKFAKGDVPLPSFWGGYLVRPKSIEFWQGGEHRLHDRFIYTLDNTQWIIDRLAP</sequence>
<protein>
    <recommendedName>
        <fullName evidence="1">Pyridoxine/pyridoxamine 5'-phosphate oxidase</fullName>
        <ecNumber evidence="1">1.4.3.5</ecNumber>
    </recommendedName>
    <alternativeName>
        <fullName evidence="1">PNP/PMP oxidase</fullName>
        <shortName evidence="1">PNPOx</shortName>
    </alternativeName>
    <alternativeName>
        <fullName evidence="1">Pyridoxal 5'-phosphate synthase</fullName>
    </alternativeName>
</protein>
<dbReference type="EC" id="1.4.3.5" evidence="1"/>
<dbReference type="EMBL" id="CP000681">
    <property type="protein sequence ID" value="ABP75374.1"/>
    <property type="molecule type" value="Genomic_DNA"/>
</dbReference>
<dbReference type="SMR" id="A4Y5Z1"/>
<dbReference type="STRING" id="319224.Sputcn32_1649"/>
<dbReference type="KEGG" id="spc:Sputcn32_1649"/>
<dbReference type="eggNOG" id="COG0259">
    <property type="taxonomic scope" value="Bacteria"/>
</dbReference>
<dbReference type="HOGENOM" id="CLU_032263_2_2_6"/>
<dbReference type="UniPathway" id="UPA01068">
    <property type="reaction ID" value="UER00304"/>
</dbReference>
<dbReference type="UniPathway" id="UPA01068">
    <property type="reaction ID" value="UER00305"/>
</dbReference>
<dbReference type="GO" id="GO:0010181">
    <property type="term" value="F:FMN binding"/>
    <property type="evidence" value="ECO:0007669"/>
    <property type="project" value="UniProtKB-UniRule"/>
</dbReference>
<dbReference type="GO" id="GO:0004733">
    <property type="term" value="F:pyridoxamine phosphate oxidase activity"/>
    <property type="evidence" value="ECO:0007669"/>
    <property type="project" value="UniProtKB-UniRule"/>
</dbReference>
<dbReference type="GO" id="GO:0008615">
    <property type="term" value="P:pyridoxine biosynthetic process"/>
    <property type="evidence" value="ECO:0007669"/>
    <property type="project" value="UniProtKB-KW"/>
</dbReference>
<dbReference type="Gene3D" id="2.30.110.10">
    <property type="entry name" value="Electron Transport, Fmn-binding Protein, Chain A"/>
    <property type="match status" value="1"/>
</dbReference>
<dbReference type="HAMAP" id="MF_01629">
    <property type="entry name" value="PdxH"/>
    <property type="match status" value="1"/>
</dbReference>
<dbReference type="InterPro" id="IPR000659">
    <property type="entry name" value="Pyridox_Oxase"/>
</dbReference>
<dbReference type="InterPro" id="IPR019740">
    <property type="entry name" value="Pyridox_Oxase_CS"/>
</dbReference>
<dbReference type="InterPro" id="IPR011576">
    <property type="entry name" value="Pyridox_Oxase_N"/>
</dbReference>
<dbReference type="InterPro" id="IPR019576">
    <property type="entry name" value="Pyridoxamine_oxidase_dimer_C"/>
</dbReference>
<dbReference type="InterPro" id="IPR012349">
    <property type="entry name" value="Split_barrel_FMN-bd"/>
</dbReference>
<dbReference type="NCBIfam" id="TIGR00558">
    <property type="entry name" value="pdxH"/>
    <property type="match status" value="1"/>
</dbReference>
<dbReference type="NCBIfam" id="NF004231">
    <property type="entry name" value="PRK05679.1"/>
    <property type="match status" value="1"/>
</dbReference>
<dbReference type="PANTHER" id="PTHR10851:SF0">
    <property type="entry name" value="PYRIDOXINE-5'-PHOSPHATE OXIDASE"/>
    <property type="match status" value="1"/>
</dbReference>
<dbReference type="PANTHER" id="PTHR10851">
    <property type="entry name" value="PYRIDOXINE-5-PHOSPHATE OXIDASE"/>
    <property type="match status" value="1"/>
</dbReference>
<dbReference type="Pfam" id="PF10590">
    <property type="entry name" value="PNP_phzG_C"/>
    <property type="match status" value="1"/>
</dbReference>
<dbReference type="Pfam" id="PF01243">
    <property type="entry name" value="PNPOx_N"/>
    <property type="match status" value="1"/>
</dbReference>
<dbReference type="PIRSF" id="PIRSF000190">
    <property type="entry name" value="Pyd_amn-ph_oxd"/>
    <property type="match status" value="1"/>
</dbReference>
<dbReference type="SUPFAM" id="SSF50475">
    <property type="entry name" value="FMN-binding split barrel"/>
    <property type="match status" value="1"/>
</dbReference>
<dbReference type="PROSITE" id="PS01064">
    <property type="entry name" value="PYRIDOX_OXIDASE"/>
    <property type="match status" value="1"/>
</dbReference>
<proteinExistence type="inferred from homology"/>
<gene>
    <name evidence="1" type="primary">pdxH</name>
    <name type="ordered locus">Sputcn32_1649</name>
</gene>
<accession>A4Y5Z1</accession>
<feature type="chain" id="PRO_0000335802" description="Pyridoxine/pyridoxamine 5'-phosphate oxidase">
    <location>
        <begin position="1"/>
        <end position="212"/>
    </location>
</feature>
<feature type="binding site" evidence="1">
    <location>
        <begin position="8"/>
        <end position="11"/>
    </location>
    <ligand>
        <name>substrate</name>
    </ligand>
</feature>
<feature type="binding site" evidence="1">
    <location>
        <begin position="61"/>
        <end position="66"/>
    </location>
    <ligand>
        <name>FMN</name>
        <dbReference type="ChEBI" id="CHEBI:58210"/>
    </ligand>
</feature>
<feature type="binding site" evidence="1">
    <location>
        <position position="66"/>
    </location>
    <ligand>
        <name>substrate</name>
    </ligand>
</feature>
<feature type="binding site" evidence="1">
    <location>
        <begin position="76"/>
        <end position="77"/>
    </location>
    <ligand>
        <name>FMN</name>
        <dbReference type="ChEBI" id="CHEBI:58210"/>
    </ligand>
</feature>
<feature type="binding site" evidence="1">
    <location>
        <position position="82"/>
    </location>
    <ligand>
        <name>FMN</name>
        <dbReference type="ChEBI" id="CHEBI:58210"/>
    </ligand>
</feature>
<feature type="binding site" evidence="1">
    <location>
        <position position="83"/>
    </location>
    <ligand>
        <name>FMN</name>
        <dbReference type="ChEBI" id="CHEBI:58210"/>
    </ligand>
</feature>
<feature type="binding site" evidence="1">
    <location>
        <position position="105"/>
    </location>
    <ligand>
        <name>FMN</name>
        <dbReference type="ChEBI" id="CHEBI:58210"/>
    </ligand>
</feature>
<feature type="binding site" evidence="1">
    <location>
        <position position="123"/>
    </location>
    <ligand>
        <name>substrate</name>
    </ligand>
</feature>
<feature type="binding site" evidence="1">
    <location>
        <position position="127"/>
    </location>
    <ligand>
        <name>substrate</name>
    </ligand>
</feature>
<feature type="binding site" evidence="1">
    <location>
        <position position="131"/>
    </location>
    <ligand>
        <name>substrate</name>
    </ligand>
</feature>
<feature type="binding site" evidence="1">
    <location>
        <begin position="140"/>
        <end position="141"/>
    </location>
    <ligand>
        <name>FMN</name>
        <dbReference type="ChEBI" id="CHEBI:58210"/>
    </ligand>
</feature>
<feature type="binding site" evidence="1">
    <location>
        <position position="185"/>
    </location>
    <ligand>
        <name>FMN</name>
        <dbReference type="ChEBI" id="CHEBI:58210"/>
    </ligand>
</feature>
<feature type="binding site" evidence="1">
    <location>
        <begin position="191"/>
        <end position="193"/>
    </location>
    <ligand>
        <name>substrate</name>
    </ligand>
</feature>
<feature type="binding site" evidence="1">
    <location>
        <position position="195"/>
    </location>
    <ligand>
        <name>FMN</name>
        <dbReference type="ChEBI" id="CHEBI:58210"/>
    </ligand>
</feature>
<organism>
    <name type="scientific">Shewanella putrefaciens (strain CN-32 / ATCC BAA-453)</name>
    <dbReference type="NCBI Taxonomy" id="319224"/>
    <lineage>
        <taxon>Bacteria</taxon>
        <taxon>Pseudomonadati</taxon>
        <taxon>Pseudomonadota</taxon>
        <taxon>Gammaproteobacteria</taxon>
        <taxon>Alteromonadales</taxon>
        <taxon>Shewanellaceae</taxon>
        <taxon>Shewanella</taxon>
    </lineage>
</organism>
<name>PDXH_SHEPC</name>
<evidence type="ECO:0000255" key="1">
    <source>
        <dbReference type="HAMAP-Rule" id="MF_01629"/>
    </source>
</evidence>
<comment type="function">
    <text evidence="1">Catalyzes the oxidation of either pyridoxine 5'-phosphate (PNP) or pyridoxamine 5'-phosphate (PMP) into pyridoxal 5'-phosphate (PLP).</text>
</comment>
<comment type="catalytic activity">
    <reaction evidence="1">
        <text>pyridoxamine 5'-phosphate + O2 + H2O = pyridoxal 5'-phosphate + H2O2 + NH4(+)</text>
        <dbReference type="Rhea" id="RHEA:15817"/>
        <dbReference type="ChEBI" id="CHEBI:15377"/>
        <dbReference type="ChEBI" id="CHEBI:15379"/>
        <dbReference type="ChEBI" id="CHEBI:16240"/>
        <dbReference type="ChEBI" id="CHEBI:28938"/>
        <dbReference type="ChEBI" id="CHEBI:58451"/>
        <dbReference type="ChEBI" id="CHEBI:597326"/>
        <dbReference type="EC" id="1.4.3.5"/>
    </reaction>
</comment>
<comment type="catalytic activity">
    <reaction evidence="1">
        <text>pyridoxine 5'-phosphate + O2 = pyridoxal 5'-phosphate + H2O2</text>
        <dbReference type="Rhea" id="RHEA:15149"/>
        <dbReference type="ChEBI" id="CHEBI:15379"/>
        <dbReference type="ChEBI" id="CHEBI:16240"/>
        <dbReference type="ChEBI" id="CHEBI:58589"/>
        <dbReference type="ChEBI" id="CHEBI:597326"/>
        <dbReference type="EC" id="1.4.3.5"/>
    </reaction>
</comment>
<comment type="cofactor">
    <cofactor evidence="1">
        <name>FMN</name>
        <dbReference type="ChEBI" id="CHEBI:58210"/>
    </cofactor>
    <text evidence="1">Binds 1 FMN per subunit.</text>
</comment>
<comment type="pathway">
    <text evidence="1">Cofactor metabolism; pyridoxal 5'-phosphate salvage; pyridoxal 5'-phosphate from pyridoxamine 5'-phosphate: step 1/1.</text>
</comment>
<comment type="pathway">
    <text evidence="1">Cofactor metabolism; pyridoxal 5'-phosphate salvage; pyridoxal 5'-phosphate from pyridoxine 5'-phosphate: step 1/1.</text>
</comment>
<comment type="subunit">
    <text evidence="1">Homodimer.</text>
</comment>
<comment type="similarity">
    <text evidence="1">Belongs to the pyridoxamine 5'-phosphate oxidase family.</text>
</comment>